<reference key="1">
    <citation type="journal article" date="2001" name="Science">
        <title>Mechanisms of evolution in Rickettsia conorii and R. prowazekii.</title>
        <authorList>
            <person name="Ogata H."/>
            <person name="Audic S."/>
            <person name="Renesto-Audiffren P."/>
            <person name="Fournier P.-E."/>
            <person name="Barbe V."/>
            <person name="Samson D."/>
            <person name="Roux V."/>
            <person name="Cossart P."/>
            <person name="Weissenbach J."/>
            <person name="Claverie J.-M."/>
            <person name="Raoult D."/>
        </authorList>
    </citation>
    <scope>NUCLEOTIDE SEQUENCE [LARGE SCALE GENOMIC DNA]</scope>
    <source>
        <strain>ATCC VR-613 / Malish 7</strain>
    </source>
</reference>
<feature type="chain" id="PRO_0000102264" description="Probable monothiol glutaredoxin 2">
    <location>
        <begin position="1"/>
        <end position="107"/>
    </location>
</feature>
<feature type="domain" description="Glutaredoxin" evidence="2">
    <location>
        <begin position="7"/>
        <end position="107"/>
    </location>
</feature>
<feature type="binding site" evidence="1">
    <location>
        <position position="24"/>
    </location>
    <ligand>
        <name>glutathione</name>
        <dbReference type="ChEBI" id="CHEBI:57925"/>
    </ligand>
</feature>
<feature type="binding site" evidence="1">
    <location>
        <position position="32"/>
    </location>
    <ligand>
        <name>[2Fe-2S] cluster</name>
        <dbReference type="ChEBI" id="CHEBI:190135"/>
        <note>ligand shared between dimeric partners</note>
    </ligand>
</feature>
<feature type="binding site" evidence="1">
    <location>
        <position position="61"/>
    </location>
    <ligand>
        <name>glutathione</name>
        <dbReference type="ChEBI" id="CHEBI:57925"/>
    </ligand>
</feature>
<feature type="binding site" evidence="1">
    <location>
        <position position="73"/>
    </location>
    <ligand>
        <name>glutathione</name>
        <dbReference type="ChEBI" id="CHEBI:57925"/>
    </ligand>
</feature>
<feature type="binding site" evidence="1">
    <location>
        <begin position="86"/>
        <end position="87"/>
    </location>
    <ligand>
        <name>glutathione</name>
        <dbReference type="ChEBI" id="CHEBI:57925"/>
    </ligand>
</feature>
<evidence type="ECO:0000250" key="1"/>
<evidence type="ECO:0000255" key="2">
    <source>
        <dbReference type="PROSITE-ProRule" id="PRU00686"/>
    </source>
</evidence>
<evidence type="ECO:0000305" key="3"/>
<dbReference type="EMBL" id="AE006914">
    <property type="protein sequence ID" value="AAL03686.1"/>
    <property type="status" value="ALT_INIT"/>
    <property type="molecule type" value="Genomic_DNA"/>
</dbReference>
<dbReference type="PIR" id="D97843">
    <property type="entry name" value="D97843"/>
</dbReference>
<dbReference type="SMR" id="Q92GH5"/>
<dbReference type="GeneID" id="928288"/>
<dbReference type="KEGG" id="rco:RC1148"/>
<dbReference type="HOGENOM" id="CLU_026126_2_1_5"/>
<dbReference type="Proteomes" id="UP000000816">
    <property type="component" value="Chromosome"/>
</dbReference>
<dbReference type="GO" id="GO:0051537">
    <property type="term" value="F:2 iron, 2 sulfur cluster binding"/>
    <property type="evidence" value="ECO:0007669"/>
    <property type="project" value="UniProtKB-KW"/>
</dbReference>
<dbReference type="GO" id="GO:0015036">
    <property type="term" value="F:disulfide oxidoreductase activity"/>
    <property type="evidence" value="ECO:0007669"/>
    <property type="project" value="InterPro"/>
</dbReference>
<dbReference type="GO" id="GO:0046872">
    <property type="term" value="F:metal ion binding"/>
    <property type="evidence" value="ECO:0007669"/>
    <property type="project" value="UniProtKB-KW"/>
</dbReference>
<dbReference type="CDD" id="cd03028">
    <property type="entry name" value="GRX_PICOT_like"/>
    <property type="match status" value="1"/>
</dbReference>
<dbReference type="FunFam" id="3.40.30.10:FF:000005">
    <property type="entry name" value="Glutaredoxin 5"/>
    <property type="match status" value="1"/>
</dbReference>
<dbReference type="Gene3D" id="3.40.30.10">
    <property type="entry name" value="Glutaredoxin"/>
    <property type="match status" value="1"/>
</dbReference>
<dbReference type="InterPro" id="IPR002109">
    <property type="entry name" value="Glutaredoxin"/>
</dbReference>
<dbReference type="InterPro" id="IPR033658">
    <property type="entry name" value="GRX_PICOT-like"/>
</dbReference>
<dbReference type="InterPro" id="IPR014434">
    <property type="entry name" value="Monothiol_GRX"/>
</dbReference>
<dbReference type="InterPro" id="IPR004480">
    <property type="entry name" value="Monothiol_GRX-rel"/>
</dbReference>
<dbReference type="InterPro" id="IPR036249">
    <property type="entry name" value="Thioredoxin-like_sf"/>
</dbReference>
<dbReference type="NCBIfam" id="TIGR00365">
    <property type="entry name" value="Grx4 family monothiol glutaredoxin"/>
    <property type="match status" value="1"/>
</dbReference>
<dbReference type="PANTHER" id="PTHR10293">
    <property type="entry name" value="GLUTAREDOXIN FAMILY MEMBER"/>
    <property type="match status" value="1"/>
</dbReference>
<dbReference type="PANTHER" id="PTHR10293:SF16">
    <property type="entry name" value="GLUTAREDOXIN-RELATED PROTEIN 5, MITOCHONDRIAL"/>
    <property type="match status" value="1"/>
</dbReference>
<dbReference type="Pfam" id="PF00462">
    <property type="entry name" value="Glutaredoxin"/>
    <property type="match status" value="1"/>
</dbReference>
<dbReference type="PIRSF" id="PIRSF005894">
    <property type="entry name" value="Monothiol_GRX"/>
    <property type="match status" value="1"/>
</dbReference>
<dbReference type="SUPFAM" id="SSF52833">
    <property type="entry name" value="Thioredoxin-like"/>
    <property type="match status" value="1"/>
</dbReference>
<dbReference type="PROSITE" id="PS51354">
    <property type="entry name" value="GLUTAREDOXIN_2"/>
    <property type="match status" value="1"/>
</dbReference>
<name>GLRX2_RICCN</name>
<organism>
    <name type="scientific">Rickettsia conorii (strain ATCC VR-613 / Malish 7)</name>
    <dbReference type="NCBI Taxonomy" id="272944"/>
    <lineage>
        <taxon>Bacteria</taxon>
        <taxon>Pseudomonadati</taxon>
        <taxon>Pseudomonadota</taxon>
        <taxon>Alphaproteobacteria</taxon>
        <taxon>Rickettsiales</taxon>
        <taxon>Rickettsiaceae</taxon>
        <taxon>Rickettsieae</taxon>
        <taxon>Rickettsia</taxon>
        <taxon>spotted fever group</taxon>
    </lineage>
</organism>
<keyword id="KW-0001">2Fe-2S</keyword>
<keyword id="KW-0408">Iron</keyword>
<keyword id="KW-0411">Iron-sulfur</keyword>
<keyword id="KW-0479">Metal-binding</keyword>
<keyword id="KW-0676">Redox-active center</keyword>
<sequence>MLENKNFKFIENEIKNNKVVLFMKGIKKSPACGFSGTVVAILNKLGVEFRDINVLFDAELREDLKKFSDWPTFPQLYINGELVGGCDIARELYQSGELEKMLKAYTR</sequence>
<gene>
    <name type="primary">grxC2</name>
    <name type="synonym">grlA</name>
    <name type="ordered locus">RC1148</name>
</gene>
<proteinExistence type="inferred from homology"/>
<comment type="similarity">
    <text evidence="3">Belongs to the glutaredoxin family. Monothiol subfamily.</text>
</comment>
<comment type="sequence caution" evidence="3">
    <conflict type="erroneous initiation">
        <sequence resource="EMBL-CDS" id="AAL03686"/>
    </conflict>
    <text>Extended N-terminus.</text>
</comment>
<protein>
    <recommendedName>
        <fullName>Probable monothiol glutaredoxin 2</fullName>
    </recommendedName>
</protein>
<accession>Q92GH5</accession>